<proteinExistence type="inferred from homology"/>
<gene>
    <name evidence="1" type="primary">pyrG</name>
    <name type="ordered locus">Ajs_1000</name>
</gene>
<evidence type="ECO:0000255" key="1">
    <source>
        <dbReference type="HAMAP-Rule" id="MF_01227"/>
    </source>
</evidence>
<evidence type="ECO:0000256" key="2">
    <source>
        <dbReference type="SAM" id="MobiDB-lite"/>
    </source>
</evidence>
<reference key="1">
    <citation type="submission" date="2006-12" db="EMBL/GenBank/DDBJ databases">
        <title>Complete sequence of chromosome 1 of Acidovorax sp. JS42.</title>
        <authorList>
            <person name="Copeland A."/>
            <person name="Lucas S."/>
            <person name="Lapidus A."/>
            <person name="Barry K."/>
            <person name="Detter J.C."/>
            <person name="Glavina del Rio T."/>
            <person name="Dalin E."/>
            <person name="Tice H."/>
            <person name="Pitluck S."/>
            <person name="Chertkov O."/>
            <person name="Brettin T."/>
            <person name="Bruce D."/>
            <person name="Han C."/>
            <person name="Tapia R."/>
            <person name="Gilna P."/>
            <person name="Schmutz J."/>
            <person name="Larimer F."/>
            <person name="Land M."/>
            <person name="Hauser L."/>
            <person name="Kyrpides N."/>
            <person name="Kim E."/>
            <person name="Stahl D."/>
            <person name="Richardson P."/>
        </authorList>
    </citation>
    <scope>NUCLEOTIDE SEQUENCE [LARGE SCALE GENOMIC DNA]</scope>
    <source>
        <strain>JS42</strain>
    </source>
</reference>
<sequence>MTKFVFVTGGVVSSLGKGIASASLAAILESRGLKVTLIKLDPYINVDPGTMSPFQHGEVFVTDDGAETDLDLGHYERFIETRMKQANNFTTGRIYQSVLEKERRGDYLGKTVQVIPHVTNEIQEFIKRGAGIGTPDAVDVAICEVGGTVGDIESLPFLEAVRQLSLKLGPNNSAFVHLTYLPWIAAAGELKTKPTQHTVQKLREIGIQPDALLCRALHAVPEEEKEKISLFTNVAEWGVISMWDVDTIYKVPRMLHEQGLDGLICDKLRLNTPPANLKRWDDLVYETEHPRGEVQIAMVGKYVELSDAYKSVNEALKHAGMQSHVRVKITHVDSETISDDNAAQQLAQYDAILVPGGFGSRGVEGKISTARYAREHQVPYLGICLGMQVATIEYARHVAGLQGANSTEFDPATPHPVIALITEWKDEDGTIKTRSENSDLGGTMRLGAQSSDVQPGTLAHSIYGDVVTERHRHRYEANVQYLDRLRSAGLVISALTQREHLTEIVELPQSVHPWFIGVQFHPEFKSTPWSGHPLFNAFIKAAVEHQKPAAKA</sequence>
<dbReference type="EC" id="6.3.4.2" evidence="1"/>
<dbReference type="EMBL" id="CP000539">
    <property type="protein sequence ID" value="ABM41238.1"/>
    <property type="molecule type" value="Genomic_DNA"/>
</dbReference>
<dbReference type="SMR" id="A1W4R3"/>
<dbReference type="STRING" id="232721.Ajs_1000"/>
<dbReference type="KEGG" id="ajs:Ajs_1000"/>
<dbReference type="eggNOG" id="COG0504">
    <property type="taxonomic scope" value="Bacteria"/>
</dbReference>
<dbReference type="HOGENOM" id="CLU_011675_5_0_4"/>
<dbReference type="UniPathway" id="UPA00159">
    <property type="reaction ID" value="UER00277"/>
</dbReference>
<dbReference type="Proteomes" id="UP000000645">
    <property type="component" value="Chromosome"/>
</dbReference>
<dbReference type="GO" id="GO:0005829">
    <property type="term" value="C:cytosol"/>
    <property type="evidence" value="ECO:0007669"/>
    <property type="project" value="TreeGrafter"/>
</dbReference>
<dbReference type="GO" id="GO:0005524">
    <property type="term" value="F:ATP binding"/>
    <property type="evidence" value="ECO:0007669"/>
    <property type="project" value="UniProtKB-KW"/>
</dbReference>
<dbReference type="GO" id="GO:0003883">
    <property type="term" value="F:CTP synthase activity"/>
    <property type="evidence" value="ECO:0007669"/>
    <property type="project" value="UniProtKB-UniRule"/>
</dbReference>
<dbReference type="GO" id="GO:0004359">
    <property type="term" value="F:glutaminase activity"/>
    <property type="evidence" value="ECO:0007669"/>
    <property type="project" value="RHEA"/>
</dbReference>
<dbReference type="GO" id="GO:0042802">
    <property type="term" value="F:identical protein binding"/>
    <property type="evidence" value="ECO:0007669"/>
    <property type="project" value="TreeGrafter"/>
</dbReference>
<dbReference type="GO" id="GO:0046872">
    <property type="term" value="F:metal ion binding"/>
    <property type="evidence" value="ECO:0007669"/>
    <property type="project" value="UniProtKB-KW"/>
</dbReference>
<dbReference type="GO" id="GO:0044210">
    <property type="term" value="P:'de novo' CTP biosynthetic process"/>
    <property type="evidence" value="ECO:0007669"/>
    <property type="project" value="UniProtKB-UniRule"/>
</dbReference>
<dbReference type="GO" id="GO:0019856">
    <property type="term" value="P:pyrimidine nucleobase biosynthetic process"/>
    <property type="evidence" value="ECO:0007669"/>
    <property type="project" value="TreeGrafter"/>
</dbReference>
<dbReference type="CDD" id="cd03113">
    <property type="entry name" value="CTPS_N"/>
    <property type="match status" value="1"/>
</dbReference>
<dbReference type="CDD" id="cd01746">
    <property type="entry name" value="GATase1_CTP_Synthase"/>
    <property type="match status" value="1"/>
</dbReference>
<dbReference type="FunFam" id="3.40.50.300:FF:000009">
    <property type="entry name" value="CTP synthase"/>
    <property type="match status" value="1"/>
</dbReference>
<dbReference type="FunFam" id="3.40.50.880:FF:000002">
    <property type="entry name" value="CTP synthase"/>
    <property type="match status" value="1"/>
</dbReference>
<dbReference type="Gene3D" id="3.40.50.880">
    <property type="match status" value="1"/>
</dbReference>
<dbReference type="Gene3D" id="3.40.50.300">
    <property type="entry name" value="P-loop containing nucleotide triphosphate hydrolases"/>
    <property type="match status" value="1"/>
</dbReference>
<dbReference type="HAMAP" id="MF_01227">
    <property type="entry name" value="PyrG"/>
    <property type="match status" value="1"/>
</dbReference>
<dbReference type="InterPro" id="IPR029062">
    <property type="entry name" value="Class_I_gatase-like"/>
</dbReference>
<dbReference type="InterPro" id="IPR004468">
    <property type="entry name" value="CTP_synthase"/>
</dbReference>
<dbReference type="InterPro" id="IPR017456">
    <property type="entry name" value="CTP_synthase_N"/>
</dbReference>
<dbReference type="InterPro" id="IPR017926">
    <property type="entry name" value="GATASE"/>
</dbReference>
<dbReference type="InterPro" id="IPR033828">
    <property type="entry name" value="GATase1_CTP_Synthase"/>
</dbReference>
<dbReference type="InterPro" id="IPR027417">
    <property type="entry name" value="P-loop_NTPase"/>
</dbReference>
<dbReference type="NCBIfam" id="NF003792">
    <property type="entry name" value="PRK05380.1"/>
    <property type="match status" value="1"/>
</dbReference>
<dbReference type="NCBIfam" id="TIGR00337">
    <property type="entry name" value="PyrG"/>
    <property type="match status" value="1"/>
</dbReference>
<dbReference type="PANTHER" id="PTHR11550">
    <property type="entry name" value="CTP SYNTHASE"/>
    <property type="match status" value="1"/>
</dbReference>
<dbReference type="PANTHER" id="PTHR11550:SF0">
    <property type="entry name" value="CTP SYNTHASE-RELATED"/>
    <property type="match status" value="1"/>
</dbReference>
<dbReference type="Pfam" id="PF06418">
    <property type="entry name" value="CTP_synth_N"/>
    <property type="match status" value="1"/>
</dbReference>
<dbReference type="Pfam" id="PF00117">
    <property type="entry name" value="GATase"/>
    <property type="match status" value="1"/>
</dbReference>
<dbReference type="SUPFAM" id="SSF52317">
    <property type="entry name" value="Class I glutamine amidotransferase-like"/>
    <property type="match status" value="1"/>
</dbReference>
<dbReference type="SUPFAM" id="SSF52540">
    <property type="entry name" value="P-loop containing nucleoside triphosphate hydrolases"/>
    <property type="match status" value="1"/>
</dbReference>
<dbReference type="PROSITE" id="PS51273">
    <property type="entry name" value="GATASE_TYPE_1"/>
    <property type="match status" value="1"/>
</dbReference>
<feature type="chain" id="PRO_1000139365" description="CTP synthase">
    <location>
        <begin position="1"/>
        <end position="552"/>
    </location>
</feature>
<feature type="domain" description="Glutamine amidotransferase type-1" evidence="1">
    <location>
        <begin position="295"/>
        <end position="548"/>
    </location>
</feature>
<feature type="region of interest" description="Amidoligase domain" evidence="1">
    <location>
        <begin position="1"/>
        <end position="270"/>
    </location>
</feature>
<feature type="region of interest" description="Disordered" evidence="2">
    <location>
        <begin position="432"/>
        <end position="451"/>
    </location>
</feature>
<feature type="active site" description="Nucleophile; for glutamine hydrolysis" evidence="1">
    <location>
        <position position="384"/>
    </location>
</feature>
<feature type="active site" evidence="1">
    <location>
        <position position="521"/>
    </location>
</feature>
<feature type="active site" evidence="1">
    <location>
        <position position="523"/>
    </location>
</feature>
<feature type="binding site" evidence="1">
    <location>
        <position position="13"/>
    </location>
    <ligand>
        <name>CTP</name>
        <dbReference type="ChEBI" id="CHEBI:37563"/>
        <note>allosteric inhibitor</note>
    </ligand>
</feature>
<feature type="binding site" evidence="1">
    <location>
        <position position="13"/>
    </location>
    <ligand>
        <name>UTP</name>
        <dbReference type="ChEBI" id="CHEBI:46398"/>
    </ligand>
</feature>
<feature type="binding site" evidence="1">
    <location>
        <begin position="14"/>
        <end position="19"/>
    </location>
    <ligand>
        <name>ATP</name>
        <dbReference type="ChEBI" id="CHEBI:30616"/>
    </ligand>
</feature>
<feature type="binding site" evidence="1">
    <location>
        <position position="71"/>
    </location>
    <ligand>
        <name>ATP</name>
        <dbReference type="ChEBI" id="CHEBI:30616"/>
    </ligand>
</feature>
<feature type="binding site" evidence="1">
    <location>
        <position position="71"/>
    </location>
    <ligand>
        <name>Mg(2+)</name>
        <dbReference type="ChEBI" id="CHEBI:18420"/>
    </ligand>
</feature>
<feature type="binding site" evidence="1">
    <location>
        <position position="144"/>
    </location>
    <ligand>
        <name>Mg(2+)</name>
        <dbReference type="ChEBI" id="CHEBI:18420"/>
    </ligand>
</feature>
<feature type="binding site" evidence="1">
    <location>
        <begin position="151"/>
        <end position="153"/>
    </location>
    <ligand>
        <name>CTP</name>
        <dbReference type="ChEBI" id="CHEBI:37563"/>
        <note>allosteric inhibitor</note>
    </ligand>
</feature>
<feature type="binding site" evidence="1">
    <location>
        <begin position="191"/>
        <end position="196"/>
    </location>
    <ligand>
        <name>CTP</name>
        <dbReference type="ChEBI" id="CHEBI:37563"/>
        <note>allosteric inhibitor</note>
    </ligand>
</feature>
<feature type="binding site" evidence="1">
    <location>
        <begin position="191"/>
        <end position="196"/>
    </location>
    <ligand>
        <name>UTP</name>
        <dbReference type="ChEBI" id="CHEBI:46398"/>
    </ligand>
</feature>
<feature type="binding site" evidence="1">
    <location>
        <position position="227"/>
    </location>
    <ligand>
        <name>CTP</name>
        <dbReference type="ChEBI" id="CHEBI:37563"/>
        <note>allosteric inhibitor</note>
    </ligand>
</feature>
<feature type="binding site" evidence="1">
    <location>
        <position position="227"/>
    </location>
    <ligand>
        <name>UTP</name>
        <dbReference type="ChEBI" id="CHEBI:46398"/>
    </ligand>
</feature>
<feature type="binding site" evidence="1">
    <location>
        <position position="357"/>
    </location>
    <ligand>
        <name>L-glutamine</name>
        <dbReference type="ChEBI" id="CHEBI:58359"/>
    </ligand>
</feature>
<feature type="binding site" evidence="1">
    <location>
        <begin position="385"/>
        <end position="388"/>
    </location>
    <ligand>
        <name>L-glutamine</name>
        <dbReference type="ChEBI" id="CHEBI:58359"/>
    </ligand>
</feature>
<feature type="binding site" evidence="1">
    <location>
        <position position="408"/>
    </location>
    <ligand>
        <name>L-glutamine</name>
        <dbReference type="ChEBI" id="CHEBI:58359"/>
    </ligand>
</feature>
<feature type="binding site" evidence="1">
    <location>
        <position position="474"/>
    </location>
    <ligand>
        <name>L-glutamine</name>
        <dbReference type="ChEBI" id="CHEBI:58359"/>
    </ligand>
</feature>
<name>PYRG_ACISJ</name>
<comment type="function">
    <text evidence="1">Catalyzes the ATP-dependent amination of UTP to CTP with either L-glutamine or ammonia as the source of nitrogen. Regulates intracellular CTP levels through interactions with the four ribonucleotide triphosphates.</text>
</comment>
<comment type="catalytic activity">
    <reaction evidence="1">
        <text>UTP + L-glutamine + ATP + H2O = CTP + L-glutamate + ADP + phosphate + 2 H(+)</text>
        <dbReference type="Rhea" id="RHEA:26426"/>
        <dbReference type="ChEBI" id="CHEBI:15377"/>
        <dbReference type="ChEBI" id="CHEBI:15378"/>
        <dbReference type="ChEBI" id="CHEBI:29985"/>
        <dbReference type="ChEBI" id="CHEBI:30616"/>
        <dbReference type="ChEBI" id="CHEBI:37563"/>
        <dbReference type="ChEBI" id="CHEBI:43474"/>
        <dbReference type="ChEBI" id="CHEBI:46398"/>
        <dbReference type="ChEBI" id="CHEBI:58359"/>
        <dbReference type="ChEBI" id="CHEBI:456216"/>
        <dbReference type="EC" id="6.3.4.2"/>
    </reaction>
</comment>
<comment type="catalytic activity">
    <reaction evidence="1">
        <text>L-glutamine + H2O = L-glutamate + NH4(+)</text>
        <dbReference type="Rhea" id="RHEA:15889"/>
        <dbReference type="ChEBI" id="CHEBI:15377"/>
        <dbReference type="ChEBI" id="CHEBI:28938"/>
        <dbReference type="ChEBI" id="CHEBI:29985"/>
        <dbReference type="ChEBI" id="CHEBI:58359"/>
    </reaction>
</comment>
<comment type="catalytic activity">
    <reaction evidence="1">
        <text>UTP + NH4(+) + ATP = CTP + ADP + phosphate + 2 H(+)</text>
        <dbReference type="Rhea" id="RHEA:16597"/>
        <dbReference type="ChEBI" id="CHEBI:15378"/>
        <dbReference type="ChEBI" id="CHEBI:28938"/>
        <dbReference type="ChEBI" id="CHEBI:30616"/>
        <dbReference type="ChEBI" id="CHEBI:37563"/>
        <dbReference type="ChEBI" id="CHEBI:43474"/>
        <dbReference type="ChEBI" id="CHEBI:46398"/>
        <dbReference type="ChEBI" id="CHEBI:456216"/>
    </reaction>
</comment>
<comment type="activity regulation">
    <text evidence="1">Allosterically activated by GTP, when glutamine is the substrate; GTP has no effect on the reaction when ammonia is the substrate. The allosteric effector GTP functions by stabilizing the protein conformation that binds the tetrahedral intermediate(s) formed during glutamine hydrolysis. Inhibited by the product CTP, via allosteric rather than competitive inhibition.</text>
</comment>
<comment type="pathway">
    <text evidence="1">Pyrimidine metabolism; CTP biosynthesis via de novo pathway; CTP from UDP: step 2/2.</text>
</comment>
<comment type="subunit">
    <text evidence="1">Homotetramer.</text>
</comment>
<comment type="miscellaneous">
    <text evidence="1">CTPSs have evolved a hybrid strategy for distinguishing between UTP and CTP. The overlapping regions of the product feedback inhibitory and substrate sites recognize a common feature in both compounds, the triphosphate moiety. To differentiate isosteric substrate and product pyrimidine rings, an additional pocket far from the expected kinase/ligase catalytic site, specifically recognizes the cytosine and ribose portions of the product inhibitor.</text>
</comment>
<comment type="similarity">
    <text evidence="1">Belongs to the CTP synthase family.</text>
</comment>
<keyword id="KW-0067">ATP-binding</keyword>
<keyword id="KW-0315">Glutamine amidotransferase</keyword>
<keyword id="KW-0436">Ligase</keyword>
<keyword id="KW-0460">Magnesium</keyword>
<keyword id="KW-0479">Metal-binding</keyword>
<keyword id="KW-0547">Nucleotide-binding</keyword>
<keyword id="KW-0665">Pyrimidine biosynthesis</keyword>
<organism>
    <name type="scientific">Acidovorax sp. (strain JS42)</name>
    <dbReference type="NCBI Taxonomy" id="232721"/>
    <lineage>
        <taxon>Bacteria</taxon>
        <taxon>Pseudomonadati</taxon>
        <taxon>Pseudomonadota</taxon>
        <taxon>Betaproteobacteria</taxon>
        <taxon>Burkholderiales</taxon>
        <taxon>Comamonadaceae</taxon>
        <taxon>Acidovorax</taxon>
    </lineage>
</organism>
<accession>A1W4R3</accession>
<protein>
    <recommendedName>
        <fullName evidence="1">CTP synthase</fullName>
        <ecNumber evidence="1">6.3.4.2</ecNumber>
    </recommendedName>
    <alternativeName>
        <fullName evidence="1">Cytidine 5'-triphosphate synthase</fullName>
    </alternativeName>
    <alternativeName>
        <fullName evidence="1">Cytidine triphosphate synthetase</fullName>
        <shortName evidence="1">CTP synthetase</shortName>
        <shortName evidence="1">CTPS</shortName>
    </alternativeName>
    <alternativeName>
        <fullName evidence="1">UTP--ammonia ligase</fullName>
    </alternativeName>
</protein>